<keyword id="KW-0694">RNA-binding</keyword>
<keyword id="KW-0804">Transcription</keyword>
<keyword id="KW-0889">Transcription antitermination</keyword>
<keyword id="KW-0805">Transcription regulation</keyword>
<reference key="1">
    <citation type="journal article" date="2007" name="Genome Biol.">
        <title>Characterization and modeling of the Haemophilus influenzae core and supragenomes based on the complete genomic sequences of Rd and 12 clinical nontypeable strains.</title>
        <authorList>
            <person name="Hogg J.S."/>
            <person name="Hu F.Z."/>
            <person name="Janto B."/>
            <person name="Boissy R."/>
            <person name="Hayes J."/>
            <person name="Keefe R."/>
            <person name="Post J.C."/>
            <person name="Ehrlich G.D."/>
        </authorList>
    </citation>
    <scope>NUCLEOTIDE SEQUENCE [LARGE SCALE GENOMIC DNA]</scope>
    <source>
        <strain>PittGG</strain>
    </source>
</reference>
<feature type="chain" id="PRO_1000023737" description="Transcription antitermination protein NusB">
    <location>
        <begin position="1"/>
        <end position="144"/>
    </location>
</feature>
<evidence type="ECO:0000255" key="1">
    <source>
        <dbReference type="HAMAP-Rule" id="MF_00073"/>
    </source>
</evidence>
<proteinExistence type="inferred from homology"/>
<protein>
    <recommendedName>
        <fullName evidence="1">Transcription antitermination protein NusB</fullName>
    </recommendedName>
    <alternativeName>
        <fullName evidence="1">Antitermination factor NusB</fullName>
    </alternativeName>
</protein>
<organism>
    <name type="scientific">Haemophilus influenzae (strain PittGG)</name>
    <dbReference type="NCBI Taxonomy" id="374931"/>
    <lineage>
        <taxon>Bacteria</taxon>
        <taxon>Pseudomonadati</taxon>
        <taxon>Pseudomonadota</taxon>
        <taxon>Gammaproteobacteria</taxon>
        <taxon>Pasteurellales</taxon>
        <taxon>Pasteurellaceae</taxon>
        <taxon>Haemophilus</taxon>
    </lineage>
</organism>
<comment type="function">
    <text evidence="1">Involved in transcription antitermination. Required for transcription of ribosomal RNA (rRNA) genes. Binds specifically to the boxA antiterminator sequence of the ribosomal RNA (rrn) operons.</text>
</comment>
<comment type="similarity">
    <text evidence="1">Belongs to the NusB family.</text>
</comment>
<accession>A5UF14</accession>
<gene>
    <name evidence="1" type="primary">nusB</name>
    <name type="ordered locus">CGSHiGG_01440</name>
</gene>
<name>NUSB_HAEIG</name>
<dbReference type="EMBL" id="CP000672">
    <property type="protein sequence ID" value="ABQ99369.1"/>
    <property type="molecule type" value="Genomic_DNA"/>
</dbReference>
<dbReference type="SMR" id="A5UF14"/>
<dbReference type="KEGG" id="hiq:CGSHiGG_01440"/>
<dbReference type="HOGENOM" id="CLU_087843_4_1_6"/>
<dbReference type="Proteomes" id="UP000001990">
    <property type="component" value="Chromosome"/>
</dbReference>
<dbReference type="GO" id="GO:0005829">
    <property type="term" value="C:cytosol"/>
    <property type="evidence" value="ECO:0007669"/>
    <property type="project" value="TreeGrafter"/>
</dbReference>
<dbReference type="GO" id="GO:0003723">
    <property type="term" value="F:RNA binding"/>
    <property type="evidence" value="ECO:0007669"/>
    <property type="project" value="UniProtKB-UniRule"/>
</dbReference>
<dbReference type="GO" id="GO:0006353">
    <property type="term" value="P:DNA-templated transcription termination"/>
    <property type="evidence" value="ECO:0007669"/>
    <property type="project" value="UniProtKB-UniRule"/>
</dbReference>
<dbReference type="GO" id="GO:0031564">
    <property type="term" value="P:transcription antitermination"/>
    <property type="evidence" value="ECO:0007669"/>
    <property type="project" value="UniProtKB-KW"/>
</dbReference>
<dbReference type="CDD" id="cd00619">
    <property type="entry name" value="Terminator_NusB"/>
    <property type="match status" value="1"/>
</dbReference>
<dbReference type="FunFam" id="1.10.940.10:FF:000001">
    <property type="entry name" value="Transcription antitermination factor NusB"/>
    <property type="match status" value="1"/>
</dbReference>
<dbReference type="Gene3D" id="1.10.940.10">
    <property type="entry name" value="NusB-like"/>
    <property type="match status" value="1"/>
</dbReference>
<dbReference type="HAMAP" id="MF_00073">
    <property type="entry name" value="NusB"/>
    <property type="match status" value="1"/>
</dbReference>
<dbReference type="InterPro" id="IPR035926">
    <property type="entry name" value="NusB-like_sf"/>
</dbReference>
<dbReference type="InterPro" id="IPR011605">
    <property type="entry name" value="NusB_fam"/>
</dbReference>
<dbReference type="InterPro" id="IPR006027">
    <property type="entry name" value="NusB_RsmB_TIM44"/>
</dbReference>
<dbReference type="NCBIfam" id="TIGR01951">
    <property type="entry name" value="nusB"/>
    <property type="match status" value="1"/>
</dbReference>
<dbReference type="PANTHER" id="PTHR11078:SF3">
    <property type="entry name" value="ANTITERMINATION NUSB DOMAIN-CONTAINING PROTEIN"/>
    <property type="match status" value="1"/>
</dbReference>
<dbReference type="PANTHER" id="PTHR11078">
    <property type="entry name" value="N UTILIZATION SUBSTANCE PROTEIN B-RELATED"/>
    <property type="match status" value="1"/>
</dbReference>
<dbReference type="Pfam" id="PF01029">
    <property type="entry name" value="NusB"/>
    <property type="match status" value="1"/>
</dbReference>
<dbReference type="SUPFAM" id="SSF48013">
    <property type="entry name" value="NusB-like"/>
    <property type="match status" value="1"/>
</dbReference>
<sequence length="144" mass="16486">MTEQKQVKKPSARRRARECTVQALYSWAVSGNTAEQVELAFVLDQDMDGVDKPYFRKLFRQTIENIETVDFSISPYIDRAFDELDPIETAILRLAVYELRFELDVPYKVVINEAIEVAKVFGADESHKYINGVLDKIAPALGRK</sequence>